<reference key="1">
    <citation type="journal article" date="2010" name="PLoS ONE">
        <title>The complete multipartite genome sequence of Cupriavidus necator JMP134, a versatile pollutant degrader.</title>
        <authorList>
            <person name="Lykidis A."/>
            <person name="Perez-Pantoja D."/>
            <person name="Ledger T."/>
            <person name="Mavromatis K."/>
            <person name="Anderson I.J."/>
            <person name="Ivanova N.N."/>
            <person name="Hooper S.D."/>
            <person name="Lapidus A."/>
            <person name="Lucas S."/>
            <person name="Gonzalez B."/>
            <person name="Kyrpides N.C."/>
        </authorList>
    </citation>
    <scope>NUCLEOTIDE SEQUENCE [LARGE SCALE GENOMIC DNA]</scope>
    <source>
        <strain>JMP134 / LMG 1197</strain>
    </source>
</reference>
<organism>
    <name type="scientific">Cupriavidus pinatubonensis (strain JMP 134 / LMG 1197)</name>
    <name type="common">Cupriavidus necator (strain JMP 134)</name>
    <dbReference type="NCBI Taxonomy" id="264198"/>
    <lineage>
        <taxon>Bacteria</taxon>
        <taxon>Pseudomonadati</taxon>
        <taxon>Pseudomonadota</taxon>
        <taxon>Betaproteobacteria</taxon>
        <taxon>Burkholderiales</taxon>
        <taxon>Burkholderiaceae</taxon>
        <taxon>Cupriavidus</taxon>
    </lineage>
</organism>
<comment type="function">
    <text evidence="1">Binds the lower part of the 30S subunit head. Binds mRNA in the 70S ribosome, positioning it for translation.</text>
</comment>
<comment type="subunit">
    <text evidence="1">Part of the 30S ribosomal subunit. Forms a tight complex with proteins S10 and S14.</text>
</comment>
<comment type="similarity">
    <text evidence="1">Belongs to the universal ribosomal protein uS3 family.</text>
</comment>
<evidence type="ECO:0000255" key="1">
    <source>
        <dbReference type="HAMAP-Rule" id="MF_01309"/>
    </source>
</evidence>
<evidence type="ECO:0000256" key="2">
    <source>
        <dbReference type="SAM" id="MobiDB-lite"/>
    </source>
</evidence>
<evidence type="ECO:0000305" key="3"/>
<name>RS3_CUPPJ</name>
<gene>
    <name evidence="1" type="primary">rpsC</name>
    <name type="ordered locus">Reut_A3173</name>
</gene>
<protein>
    <recommendedName>
        <fullName evidence="1">Small ribosomal subunit protein uS3</fullName>
    </recommendedName>
    <alternativeName>
        <fullName evidence="3">30S ribosomal protein S3</fullName>
    </alternativeName>
</protein>
<accession>Q46WF0</accession>
<feature type="chain" id="PRO_0000230721" description="Small ribosomal subunit protein uS3">
    <location>
        <begin position="1"/>
        <end position="264"/>
    </location>
</feature>
<feature type="domain" description="KH type-2" evidence="1">
    <location>
        <begin position="39"/>
        <end position="107"/>
    </location>
</feature>
<feature type="region of interest" description="Disordered" evidence="2">
    <location>
        <begin position="211"/>
        <end position="264"/>
    </location>
</feature>
<feature type="compositionally biased region" description="Basic and acidic residues" evidence="2">
    <location>
        <begin position="221"/>
        <end position="239"/>
    </location>
</feature>
<feature type="compositionally biased region" description="Gly residues" evidence="2">
    <location>
        <begin position="240"/>
        <end position="251"/>
    </location>
</feature>
<sequence length="264" mass="29777">MGQKIHPTGFRLAVSRNWASRWYANNTKFAGMLKEDIEVRDFLKKKLKNASVGRVVIERPARNARITIYSSRPGVVIGKKGEDIELLKAELQRRMGVPVHVNIEEIRKPETDAQLIADSITQQLERRIMFRRAMKRAMQNAMRLGAQGIKIMSSGRLNGIEIARTEWYREGRVPLHTLRADIDYGFSEAETTYGIIGVKVWVYKGDHLGRNDAPVVEEPQDDRRRRPGRPEGRRREGEGRPGGNRRGGAGAGRRAAPGDAKSGE</sequence>
<dbReference type="EMBL" id="CP000090">
    <property type="protein sequence ID" value="AAZ62533.1"/>
    <property type="molecule type" value="Genomic_DNA"/>
</dbReference>
<dbReference type="SMR" id="Q46WF0"/>
<dbReference type="STRING" id="264198.Reut_A3173"/>
<dbReference type="KEGG" id="reu:Reut_A3173"/>
<dbReference type="eggNOG" id="COG0092">
    <property type="taxonomic scope" value="Bacteria"/>
</dbReference>
<dbReference type="HOGENOM" id="CLU_058591_0_2_4"/>
<dbReference type="OrthoDB" id="9806396at2"/>
<dbReference type="GO" id="GO:0022627">
    <property type="term" value="C:cytosolic small ribosomal subunit"/>
    <property type="evidence" value="ECO:0007669"/>
    <property type="project" value="TreeGrafter"/>
</dbReference>
<dbReference type="GO" id="GO:0003729">
    <property type="term" value="F:mRNA binding"/>
    <property type="evidence" value="ECO:0007669"/>
    <property type="project" value="UniProtKB-UniRule"/>
</dbReference>
<dbReference type="GO" id="GO:0019843">
    <property type="term" value="F:rRNA binding"/>
    <property type="evidence" value="ECO:0007669"/>
    <property type="project" value="UniProtKB-UniRule"/>
</dbReference>
<dbReference type="GO" id="GO:0003735">
    <property type="term" value="F:structural constituent of ribosome"/>
    <property type="evidence" value="ECO:0007669"/>
    <property type="project" value="InterPro"/>
</dbReference>
<dbReference type="GO" id="GO:0006412">
    <property type="term" value="P:translation"/>
    <property type="evidence" value="ECO:0007669"/>
    <property type="project" value="UniProtKB-UniRule"/>
</dbReference>
<dbReference type="CDD" id="cd02412">
    <property type="entry name" value="KH-II_30S_S3"/>
    <property type="match status" value="1"/>
</dbReference>
<dbReference type="FunFam" id="3.30.1140.32:FF:000006">
    <property type="entry name" value="30S ribosomal protein S3"/>
    <property type="match status" value="1"/>
</dbReference>
<dbReference type="FunFam" id="3.30.300.20:FF:000001">
    <property type="entry name" value="30S ribosomal protein S3"/>
    <property type="match status" value="1"/>
</dbReference>
<dbReference type="Gene3D" id="3.30.300.20">
    <property type="match status" value="1"/>
</dbReference>
<dbReference type="Gene3D" id="3.30.1140.32">
    <property type="entry name" value="Ribosomal protein S3, C-terminal domain"/>
    <property type="match status" value="1"/>
</dbReference>
<dbReference type="HAMAP" id="MF_01309_B">
    <property type="entry name" value="Ribosomal_uS3_B"/>
    <property type="match status" value="1"/>
</dbReference>
<dbReference type="InterPro" id="IPR004087">
    <property type="entry name" value="KH_dom"/>
</dbReference>
<dbReference type="InterPro" id="IPR015946">
    <property type="entry name" value="KH_dom-like_a/b"/>
</dbReference>
<dbReference type="InterPro" id="IPR004044">
    <property type="entry name" value="KH_dom_type_2"/>
</dbReference>
<dbReference type="InterPro" id="IPR009019">
    <property type="entry name" value="KH_sf_prok-type"/>
</dbReference>
<dbReference type="InterPro" id="IPR036419">
    <property type="entry name" value="Ribosomal_S3_C_sf"/>
</dbReference>
<dbReference type="InterPro" id="IPR005704">
    <property type="entry name" value="Ribosomal_uS3_bac-typ"/>
</dbReference>
<dbReference type="InterPro" id="IPR001351">
    <property type="entry name" value="Ribosomal_uS3_C"/>
</dbReference>
<dbReference type="InterPro" id="IPR018280">
    <property type="entry name" value="Ribosomal_uS3_CS"/>
</dbReference>
<dbReference type="NCBIfam" id="TIGR01009">
    <property type="entry name" value="rpsC_bact"/>
    <property type="match status" value="1"/>
</dbReference>
<dbReference type="PANTHER" id="PTHR11760">
    <property type="entry name" value="30S/40S RIBOSOMAL PROTEIN S3"/>
    <property type="match status" value="1"/>
</dbReference>
<dbReference type="PANTHER" id="PTHR11760:SF19">
    <property type="entry name" value="SMALL RIBOSOMAL SUBUNIT PROTEIN US3C"/>
    <property type="match status" value="1"/>
</dbReference>
<dbReference type="Pfam" id="PF07650">
    <property type="entry name" value="KH_2"/>
    <property type="match status" value="1"/>
</dbReference>
<dbReference type="Pfam" id="PF00189">
    <property type="entry name" value="Ribosomal_S3_C"/>
    <property type="match status" value="1"/>
</dbReference>
<dbReference type="SMART" id="SM00322">
    <property type="entry name" value="KH"/>
    <property type="match status" value="1"/>
</dbReference>
<dbReference type="SUPFAM" id="SSF54814">
    <property type="entry name" value="Prokaryotic type KH domain (KH-domain type II)"/>
    <property type="match status" value="1"/>
</dbReference>
<dbReference type="SUPFAM" id="SSF54821">
    <property type="entry name" value="Ribosomal protein S3 C-terminal domain"/>
    <property type="match status" value="1"/>
</dbReference>
<dbReference type="PROSITE" id="PS50823">
    <property type="entry name" value="KH_TYPE_2"/>
    <property type="match status" value="1"/>
</dbReference>
<dbReference type="PROSITE" id="PS00548">
    <property type="entry name" value="RIBOSOMAL_S3"/>
    <property type="match status" value="1"/>
</dbReference>
<proteinExistence type="inferred from homology"/>
<keyword id="KW-0687">Ribonucleoprotein</keyword>
<keyword id="KW-0689">Ribosomal protein</keyword>
<keyword id="KW-0694">RNA-binding</keyword>
<keyword id="KW-0699">rRNA-binding</keyword>